<protein>
    <recommendedName>
        <fullName>Nuclear transcription factor Y subunit alpha</fullName>
    </recommendedName>
    <alternativeName>
        <fullName>CAAT box DNA-binding protein subunit A</fullName>
    </alternativeName>
    <alternativeName>
        <fullName>Nuclear transcription factor Y subunit A</fullName>
        <shortName>NF-YA</shortName>
    </alternativeName>
</protein>
<proteinExistence type="evidence at transcript level"/>
<feature type="chain" id="PRO_0000198767" description="Nuclear transcription factor Y subunit alpha">
    <location>
        <begin position="1"/>
        <end position="341"/>
    </location>
</feature>
<feature type="DNA-binding region" description="NFYA/HAP2-type" evidence="3">
    <location>
        <begin position="290"/>
        <end position="315"/>
    </location>
</feature>
<feature type="region of interest" description="Disordered" evidence="4">
    <location>
        <begin position="294"/>
        <end position="341"/>
    </location>
</feature>
<feature type="short sequence motif" description="Subunit association domain (SAD)">
    <location>
        <begin position="260"/>
        <end position="283"/>
    </location>
</feature>
<feature type="compositionally biased region" description="Basic residues" evidence="4">
    <location>
        <begin position="294"/>
        <end position="304"/>
    </location>
</feature>
<feature type="compositionally biased region" description="Basic and acidic residues" evidence="4">
    <location>
        <begin position="305"/>
        <end position="322"/>
    </location>
</feature>
<feature type="modified residue" description="Phosphoserine" evidence="2">
    <location>
        <position position="320"/>
    </location>
</feature>
<dbReference type="EMBL" id="BT020848">
    <property type="protein sequence ID" value="AAX08865.1"/>
    <property type="molecule type" value="mRNA"/>
</dbReference>
<dbReference type="RefSeq" id="NP_001014956.1">
    <property type="nucleotide sequence ID" value="NM_001014956.1"/>
</dbReference>
<dbReference type="SMR" id="Q5E9S2"/>
<dbReference type="FunCoup" id="Q5E9S2">
    <property type="interactions" value="3819"/>
</dbReference>
<dbReference type="STRING" id="9913.ENSBTAP00000013080"/>
<dbReference type="PaxDb" id="9913-ENSBTAP00000013080"/>
<dbReference type="GeneID" id="539584"/>
<dbReference type="KEGG" id="bta:539584"/>
<dbReference type="CTD" id="4800"/>
<dbReference type="VEuPathDB" id="HostDB:ENSBTAG00000009905"/>
<dbReference type="eggNOG" id="KOG1561">
    <property type="taxonomic scope" value="Eukaryota"/>
</dbReference>
<dbReference type="HOGENOM" id="CLU_071609_1_0_1"/>
<dbReference type="InParanoid" id="Q5E9S2"/>
<dbReference type="OMA" id="VAHMIRV"/>
<dbReference type="OrthoDB" id="1097733at2759"/>
<dbReference type="TreeFam" id="TF323257"/>
<dbReference type="Proteomes" id="UP000009136">
    <property type="component" value="Chromosome 23"/>
</dbReference>
<dbReference type="Bgee" id="ENSBTAG00000009905">
    <property type="expression patterns" value="Expressed in thymus and 111 other cell types or tissues"/>
</dbReference>
<dbReference type="GO" id="GO:0016602">
    <property type="term" value="C:CCAAT-binding factor complex"/>
    <property type="evidence" value="ECO:0000250"/>
    <property type="project" value="AgBase"/>
</dbReference>
<dbReference type="GO" id="GO:0005634">
    <property type="term" value="C:nucleus"/>
    <property type="evidence" value="ECO:0000250"/>
    <property type="project" value="AgBase"/>
</dbReference>
<dbReference type="GO" id="GO:0003677">
    <property type="term" value="F:DNA binding"/>
    <property type="evidence" value="ECO:0000250"/>
    <property type="project" value="AgBase"/>
</dbReference>
<dbReference type="GO" id="GO:0000981">
    <property type="term" value="F:DNA-binding transcription factor activity, RNA polymerase II-specific"/>
    <property type="evidence" value="ECO:0000318"/>
    <property type="project" value="GO_Central"/>
</dbReference>
<dbReference type="GO" id="GO:0000978">
    <property type="term" value="F:RNA polymerase II cis-regulatory region sequence-specific DNA binding"/>
    <property type="evidence" value="ECO:0000250"/>
    <property type="project" value="UniProtKB"/>
</dbReference>
<dbReference type="GO" id="GO:0045893">
    <property type="term" value="P:positive regulation of DNA-templated transcription"/>
    <property type="evidence" value="ECO:0000250"/>
    <property type="project" value="UniProtKB"/>
</dbReference>
<dbReference type="GO" id="GO:0006355">
    <property type="term" value="P:regulation of DNA-templated transcription"/>
    <property type="evidence" value="ECO:0000250"/>
    <property type="project" value="AgBase"/>
</dbReference>
<dbReference type="GO" id="GO:0006357">
    <property type="term" value="P:regulation of transcription by RNA polymerase II"/>
    <property type="evidence" value="ECO:0000318"/>
    <property type="project" value="GO_Central"/>
</dbReference>
<dbReference type="GO" id="GO:0048511">
    <property type="term" value="P:rhythmic process"/>
    <property type="evidence" value="ECO:0007669"/>
    <property type="project" value="UniProtKB-KW"/>
</dbReference>
<dbReference type="Gene3D" id="6.10.250.2430">
    <property type="match status" value="1"/>
</dbReference>
<dbReference type="InterPro" id="IPR018362">
    <property type="entry name" value="CCAAT-binding_factor_CS"/>
</dbReference>
<dbReference type="InterPro" id="IPR001289">
    <property type="entry name" value="NFYA"/>
</dbReference>
<dbReference type="PANTHER" id="PTHR12632">
    <property type="entry name" value="TRANSCRIPTION FACTOR NF-Y ALPHA-RELATED"/>
    <property type="match status" value="1"/>
</dbReference>
<dbReference type="Pfam" id="PF02045">
    <property type="entry name" value="CBFB_NFYA"/>
    <property type="match status" value="1"/>
</dbReference>
<dbReference type="PRINTS" id="PR00616">
    <property type="entry name" value="CCAATSUBUNTB"/>
</dbReference>
<dbReference type="SMART" id="SM00521">
    <property type="entry name" value="CBF"/>
    <property type="match status" value="1"/>
</dbReference>
<dbReference type="PROSITE" id="PS00686">
    <property type="entry name" value="NFYA_HAP2_1"/>
    <property type="match status" value="1"/>
</dbReference>
<dbReference type="PROSITE" id="PS51152">
    <property type="entry name" value="NFYA_HAP2_2"/>
    <property type="match status" value="1"/>
</dbReference>
<reference key="1">
    <citation type="journal article" date="2005" name="BMC Genomics">
        <title>Characterization of 954 bovine full-CDS cDNA sequences.</title>
        <authorList>
            <person name="Harhay G.P."/>
            <person name="Sonstegard T.S."/>
            <person name="Keele J.W."/>
            <person name="Heaton M.P."/>
            <person name="Clawson M.L."/>
            <person name="Snelling W.M."/>
            <person name="Wiedmann R.T."/>
            <person name="Van Tassell C.P."/>
            <person name="Smith T.P.L."/>
        </authorList>
    </citation>
    <scope>NUCLEOTIDE SEQUENCE [LARGE SCALE MRNA]</scope>
</reference>
<keyword id="KW-0010">Activator</keyword>
<keyword id="KW-0090">Biological rhythms</keyword>
<keyword id="KW-0238">DNA-binding</keyword>
<keyword id="KW-0539">Nucleus</keyword>
<keyword id="KW-0597">Phosphoprotein</keyword>
<keyword id="KW-1185">Reference proteome</keyword>
<keyword id="KW-0804">Transcription</keyword>
<keyword id="KW-0805">Transcription regulation</keyword>
<comment type="function">
    <text evidence="1">Component of the sequence-specific heterotrimeric transcription factor (NF-Y) which specifically recognizes a 5'-CCAAT-3' box motif found in the promoters of its target genes. NF-Y can function as both an activator and a repressor, depending on its interacting cofactors. NF-YA positively regulates the transcription of the core clock component BMAL1 (By similarity).</text>
</comment>
<comment type="subunit">
    <text evidence="1">Heterotrimeric transcription factor composed of three components, NF-YA, NF-YB and NF-YC. NF-YB and NF-YC must interact and dimerize for NF-YA association and DNA binding (By similarity). Interacts with SP1; the interaction is inhibited by glycosylation of SP1. Interacts (via N-terminus) with ZHX2 (via homeobox domain). Interacts with ZFX3. Interacts with ZHX1 (By similarity).</text>
</comment>
<comment type="subcellular location">
    <subcellularLocation>
        <location evidence="3">Nucleus</location>
    </subcellularLocation>
</comment>
<comment type="similarity">
    <text evidence="3">Belongs to the NFYA/HAP2 subunit family.</text>
</comment>
<evidence type="ECO:0000250" key="1"/>
<evidence type="ECO:0000250" key="2">
    <source>
        <dbReference type="UniProtKB" id="P23511"/>
    </source>
</evidence>
<evidence type="ECO:0000255" key="3">
    <source>
        <dbReference type="PROSITE-ProRule" id="PRU00966"/>
    </source>
</evidence>
<evidence type="ECO:0000256" key="4">
    <source>
        <dbReference type="SAM" id="MobiDB-lite"/>
    </source>
</evidence>
<accession>Q5E9S2</accession>
<organism>
    <name type="scientific">Bos taurus</name>
    <name type="common">Bovine</name>
    <dbReference type="NCBI Taxonomy" id="9913"/>
    <lineage>
        <taxon>Eukaryota</taxon>
        <taxon>Metazoa</taxon>
        <taxon>Chordata</taxon>
        <taxon>Craniata</taxon>
        <taxon>Vertebrata</taxon>
        <taxon>Euteleostomi</taxon>
        <taxon>Mammalia</taxon>
        <taxon>Eutheria</taxon>
        <taxon>Laurasiatheria</taxon>
        <taxon>Artiodactyla</taxon>
        <taxon>Ruminantia</taxon>
        <taxon>Pecora</taxon>
        <taxon>Bovidae</taxon>
        <taxon>Bovinae</taxon>
        <taxon>Bos</taxon>
    </lineage>
</organism>
<name>NFYA_BOVIN</name>
<sequence>MEQYAANSNSSAEQIVVQAGQIQQQQQGGVTAVQLQTEAQVASASGQQVQTLQVVQGQPLMVQVSGGQLITSTGQPIMVQAVPGGQGQTIMQVPVSGTQGLQQIQLVPPGQIQIQGGQAVQVQGQQGQTQQIIIQQPQTAVTAGQTQTQQQIAVQGQQVAQTAEGQTIVYQPVNADGTILQQGMITIPAASLAGAQIVQTGANTNTTSSGQGTVTVTLPVAGNVVNSGGMVMMVPGAGSVPAIQRIPLPGAEMLEEEPLYVNAKQYHRILKRRQARAKLEAEGKIPKERRKYLHESRHRHAMARKRGEGGRFFSPKEKDSPHMQDPNQADEEAMTQIIRVS</sequence>
<gene>
    <name type="primary">NFYA</name>
</gene>